<sequence>MAVIKMTDLDLKGKRVLIREDLNVPLKEGKVADDTRIRASLPTIRHALESGARVMLLSHLGRPKEGEPDPAASLRPVAEHLATLLGQEVPLAEDWLDGVEVAEGQAVLCENVRFNVGEKANDEALAKRMAALCDVYVMDAFGTAHRAQASTHGVGQYAPVACAGPLLAAELEALGKALEAPARPMTAIVGGSKVSTKLDVLETLSEKVDQLIVGGGIANTFIAAAGHPVGKSLYEADLVDKARQLMDTARANGGEIPVPTDVVVGREFSADTQAVVKRVDEVDDEDMIFDIGPETAQRYAGMMREAGTIVWNGPVGVFEFDQFGEGTRKLGEAIAESDGFSIAGGGDTVAAVEKYGLADRISYISTGGGAFLEFLEGKTLPAVAMLEARASD</sequence>
<comment type="catalytic activity">
    <reaction evidence="1">
        <text>(2R)-3-phosphoglycerate + ATP = (2R)-3-phospho-glyceroyl phosphate + ADP</text>
        <dbReference type="Rhea" id="RHEA:14801"/>
        <dbReference type="ChEBI" id="CHEBI:30616"/>
        <dbReference type="ChEBI" id="CHEBI:57604"/>
        <dbReference type="ChEBI" id="CHEBI:58272"/>
        <dbReference type="ChEBI" id="CHEBI:456216"/>
        <dbReference type="EC" id="2.7.2.3"/>
    </reaction>
</comment>
<comment type="pathway">
    <text evidence="1">Carbohydrate degradation; glycolysis; pyruvate from D-glyceraldehyde 3-phosphate: step 2/5.</text>
</comment>
<comment type="subunit">
    <text evidence="1">Monomer.</text>
</comment>
<comment type="subcellular location">
    <subcellularLocation>
        <location evidence="1">Cytoplasm</location>
    </subcellularLocation>
</comment>
<comment type="similarity">
    <text evidence="1">Belongs to the phosphoglycerate kinase family.</text>
</comment>
<accession>Q0A4Q5</accession>
<evidence type="ECO:0000255" key="1">
    <source>
        <dbReference type="HAMAP-Rule" id="MF_00145"/>
    </source>
</evidence>
<gene>
    <name evidence="1" type="primary">pgk</name>
    <name type="ordered locus">Mlg_2842</name>
</gene>
<reference key="1">
    <citation type="submission" date="2006-08" db="EMBL/GenBank/DDBJ databases">
        <title>Complete sequence of Alkalilimnicola ehrilichei MLHE-1.</title>
        <authorList>
            <person name="Copeland A."/>
            <person name="Lucas S."/>
            <person name="Lapidus A."/>
            <person name="Barry K."/>
            <person name="Detter J.C."/>
            <person name="Glavina del Rio T."/>
            <person name="Hammon N."/>
            <person name="Israni S."/>
            <person name="Dalin E."/>
            <person name="Tice H."/>
            <person name="Pitluck S."/>
            <person name="Sims D."/>
            <person name="Brettin T."/>
            <person name="Bruce D."/>
            <person name="Han C."/>
            <person name="Tapia R."/>
            <person name="Gilna P."/>
            <person name="Schmutz J."/>
            <person name="Larimer F."/>
            <person name="Land M."/>
            <person name="Hauser L."/>
            <person name="Kyrpides N."/>
            <person name="Mikhailova N."/>
            <person name="Oremland R.S."/>
            <person name="Hoeft S.E."/>
            <person name="Switzer-Blum J."/>
            <person name="Kulp T."/>
            <person name="King G."/>
            <person name="Tabita R."/>
            <person name="Witte B."/>
            <person name="Santini J.M."/>
            <person name="Basu P."/>
            <person name="Hollibaugh J.T."/>
            <person name="Xie G."/>
            <person name="Stolz J.F."/>
            <person name="Richardson P."/>
        </authorList>
    </citation>
    <scope>NUCLEOTIDE SEQUENCE [LARGE SCALE GENOMIC DNA]</scope>
    <source>
        <strain>ATCC BAA-1101 / DSM 17681 / MLHE-1</strain>
    </source>
</reference>
<protein>
    <recommendedName>
        <fullName evidence="1">Phosphoglycerate kinase</fullName>
        <ecNumber evidence="1">2.7.2.3</ecNumber>
    </recommendedName>
</protein>
<proteinExistence type="inferred from homology"/>
<organism>
    <name type="scientific">Alkalilimnicola ehrlichii (strain ATCC BAA-1101 / DSM 17681 / MLHE-1)</name>
    <dbReference type="NCBI Taxonomy" id="187272"/>
    <lineage>
        <taxon>Bacteria</taxon>
        <taxon>Pseudomonadati</taxon>
        <taxon>Pseudomonadota</taxon>
        <taxon>Gammaproteobacteria</taxon>
        <taxon>Chromatiales</taxon>
        <taxon>Ectothiorhodospiraceae</taxon>
        <taxon>Alkalilimnicola</taxon>
    </lineage>
</organism>
<dbReference type="EC" id="2.7.2.3" evidence="1"/>
<dbReference type="EMBL" id="CP000453">
    <property type="protein sequence ID" value="ABI58182.1"/>
    <property type="molecule type" value="Genomic_DNA"/>
</dbReference>
<dbReference type="RefSeq" id="WP_011630575.1">
    <property type="nucleotide sequence ID" value="NC_008340.1"/>
</dbReference>
<dbReference type="SMR" id="Q0A4Q5"/>
<dbReference type="KEGG" id="aeh:Mlg_2842"/>
<dbReference type="eggNOG" id="COG0126">
    <property type="taxonomic scope" value="Bacteria"/>
</dbReference>
<dbReference type="HOGENOM" id="CLU_025427_0_2_6"/>
<dbReference type="OrthoDB" id="9808460at2"/>
<dbReference type="UniPathway" id="UPA00109">
    <property type="reaction ID" value="UER00185"/>
</dbReference>
<dbReference type="Proteomes" id="UP000001962">
    <property type="component" value="Chromosome"/>
</dbReference>
<dbReference type="GO" id="GO:0005829">
    <property type="term" value="C:cytosol"/>
    <property type="evidence" value="ECO:0007669"/>
    <property type="project" value="TreeGrafter"/>
</dbReference>
<dbReference type="GO" id="GO:0043531">
    <property type="term" value="F:ADP binding"/>
    <property type="evidence" value="ECO:0007669"/>
    <property type="project" value="TreeGrafter"/>
</dbReference>
<dbReference type="GO" id="GO:0005524">
    <property type="term" value="F:ATP binding"/>
    <property type="evidence" value="ECO:0007669"/>
    <property type="project" value="UniProtKB-KW"/>
</dbReference>
<dbReference type="GO" id="GO:0004618">
    <property type="term" value="F:phosphoglycerate kinase activity"/>
    <property type="evidence" value="ECO:0007669"/>
    <property type="project" value="UniProtKB-UniRule"/>
</dbReference>
<dbReference type="GO" id="GO:0006094">
    <property type="term" value="P:gluconeogenesis"/>
    <property type="evidence" value="ECO:0007669"/>
    <property type="project" value="TreeGrafter"/>
</dbReference>
<dbReference type="GO" id="GO:0006096">
    <property type="term" value="P:glycolytic process"/>
    <property type="evidence" value="ECO:0007669"/>
    <property type="project" value="UniProtKB-UniRule"/>
</dbReference>
<dbReference type="FunFam" id="3.40.50.1260:FF:000001">
    <property type="entry name" value="Phosphoglycerate kinase"/>
    <property type="match status" value="1"/>
</dbReference>
<dbReference type="FunFam" id="3.40.50.1260:FF:000002">
    <property type="entry name" value="Phosphoglycerate kinase"/>
    <property type="match status" value="1"/>
</dbReference>
<dbReference type="Gene3D" id="3.40.50.1260">
    <property type="entry name" value="Phosphoglycerate kinase, N-terminal domain"/>
    <property type="match status" value="2"/>
</dbReference>
<dbReference type="HAMAP" id="MF_00145">
    <property type="entry name" value="Phosphoglyc_kinase"/>
    <property type="match status" value="1"/>
</dbReference>
<dbReference type="InterPro" id="IPR001576">
    <property type="entry name" value="Phosphoglycerate_kinase"/>
</dbReference>
<dbReference type="InterPro" id="IPR015911">
    <property type="entry name" value="Phosphoglycerate_kinase_CS"/>
</dbReference>
<dbReference type="InterPro" id="IPR015824">
    <property type="entry name" value="Phosphoglycerate_kinase_N"/>
</dbReference>
<dbReference type="InterPro" id="IPR036043">
    <property type="entry name" value="Phosphoglycerate_kinase_sf"/>
</dbReference>
<dbReference type="PANTHER" id="PTHR11406">
    <property type="entry name" value="PHOSPHOGLYCERATE KINASE"/>
    <property type="match status" value="1"/>
</dbReference>
<dbReference type="PANTHER" id="PTHR11406:SF23">
    <property type="entry name" value="PHOSPHOGLYCERATE KINASE 1, CHLOROPLASTIC-RELATED"/>
    <property type="match status" value="1"/>
</dbReference>
<dbReference type="Pfam" id="PF00162">
    <property type="entry name" value="PGK"/>
    <property type="match status" value="1"/>
</dbReference>
<dbReference type="PIRSF" id="PIRSF000724">
    <property type="entry name" value="Pgk"/>
    <property type="match status" value="1"/>
</dbReference>
<dbReference type="PRINTS" id="PR00477">
    <property type="entry name" value="PHGLYCKINASE"/>
</dbReference>
<dbReference type="SUPFAM" id="SSF53748">
    <property type="entry name" value="Phosphoglycerate kinase"/>
    <property type="match status" value="1"/>
</dbReference>
<dbReference type="PROSITE" id="PS00111">
    <property type="entry name" value="PGLYCERATE_KINASE"/>
    <property type="match status" value="1"/>
</dbReference>
<keyword id="KW-0067">ATP-binding</keyword>
<keyword id="KW-0963">Cytoplasm</keyword>
<keyword id="KW-0324">Glycolysis</keyword>
<keyword id="KW-0418">Kinase</keyword>
<keyword id="KW-0547">Nucleotide-binding</keyword>
<keyword id="KW-1185">Reference proteome</keyword>
<keyword id="KW-0808">Transferase</keyword>
<name>PGK_ALKEH</name>
<feature type="chain" id="PRO_1000057956" description="Phosphoglycerate kinase">
    <location>
        <begin position="1"/>
        <end position="392"/>
    </location>
</feature>
<feature type="binding site" evidence="1">
    <location>
        <begin position="21"/>
        <end position="23"/>
    </location>
    <ligand>
        <name>substrate</name>
    </ligand>
</feature>
<feature type="binding site" evidence="1">
    <location>
        <position position="36"/>
    </location>
    <ligand>
        <name>substrate</name>
    </ligand>
</feature>
<feature type="binding site" evidence="1">
    <location>
        <begin position="59"/>
        <end position="62"/>
    </location>
    <ligand>
        <name>substrate</name>
    </ligand>
</feature>
<feature type="binding site" evidence="1">
    <location>
        <position position="113"/>
    </location>
    <ligand>
        <name>substrate</name>
    </ligand>
</feature>
<feature type="binding site" evidence="1">
    <location>
        <position position="146"/>
    </location>
    <ligand>
        <name>substrate</name>
    </ligand>
</feature>
<feature type="binding site" evidence="1">
    <location>
        <position position="197"/>
    </location>
    <ligand>
        <name>ATP</name>
        <dbReference type="ChEBI" id="CHEBI:30616"/>
    </ligand>
</feature>
<feature type="binding site" evidence="1">
    <location>
        <position position="319"/>
    </location>
    <ligand>
        <name>ATP</name>
        <dbReference type="ChEBI" id="CHEBI:30616"/>
    </ligand>
</feature>
<feature type="binding site" evidence="1">
    <location>
        <begin position="345"/>
        <end position="348"/>
    </location>
    <ligand>
        <name>ATP</name>
        <dbReference type="ChEBI" id="CHEBI:30616"/>
    </ligand>
</feature>